<proteinExistence type="inferred from homology"/>
<gene>
    <name evidence="1" type="primary">deoC2</name>
    <name type="ordered locus">SAS2040</name>
</gene>
<keyword id="KW-0963">Cytoplasm</keyword>
<keyword id="KW-0456">Lyase</keyword>
<keyword id="KW-0704">Schiff base</keyword>
<dbReference type="EC" id="4.1.2.4" evidence="1"/>
<dbReference type="EMBL" id="BX571857">
    <property type="protein sequence ID" value="CAG43848.1"/>
    <property type="molecule type" value="Genomic_DNA"/>
</dbReference>
<dbReference type="SMR" id="Q6G7H3"/>
<dbReference type="KEGG" id="sas:SAS2040"/>
<dbReference type="HOGENOM" id="CLU_053595_0_0_9"/>
<dbReference type="UniPathway" id="UPA00002">
    <property type="reaction ID" value="UER00468"/>
</dbReference>
<dbReference type="GO" id="GO:0005737">
    <property type="term" value="C:cytoplasm"/>
    <property type="evidence" value="ECO:0007669"/>
    <property type="project" value="UniProtKB-SubCell"/>
</dbReference>
<dbReference type="GO" id="GO:0004139">
    <property type="term" value="F:deoxyribose-phosphate aldolase activity"/>
    <property type="evidence" value="ECO:0007669"/>
    <property type="project" value="UniProtKB-UniRule"/>
</dbReference>
<dbReference type="GO" id="GO:0006018">
    <property type="term" value="P:2-deoxyribose 1-phosphate catabolic process"/>
    <property type="evidence" value="ECO:0007669"/>
    <property type="project" value="UniProtKB-UniRule"/>
</dbReference>
<dbReference type="GO" id="GO:0016052">
    <property type="term" value="P:carbohydrate catabolic process"/>
    <property type="evidence" value="ECO:0007669"/>
    <property type="project" value="TreeGrafter"/>
</dbReference>
<dbReference type="GO" id="GO:0009264">
    <property type="term" value="P:deoxyribonucleotide catabolic process"/>
    <property type="evidence" value="ECO:0007669"/>
    <property type="project" value="InterPro"/>
</dbReference>
<dbReference type="CDD" id="cd00959">
    <property type="entry name" value="DeoC"/>
    <property type="match status" value="1"/>
</dbReference>
<dbReference type="FunFam" id="3.20.20.70:FF:000044">
    <property type="entry name" value="Deoxyribose-phosphate aldolase"/>
    <property type="match status" value="1"/>
</dbReference>
<dbReference type="Gene3D" id="3.20.20.70">
    <property type="entry name" value="Aldolase class I"/>
    <property type="match status" value="1"/>
</dbReference>
<dbReference type="HAMAP" id="MF_00114">
    <property type="entry name" value="DeoC_type1"/>
    <property type="match status" value="1"/>
</dbReference>
<dbReference type="InterPro" id="IPR013785">
    <property type="entry name" value="Aldolase_TIM"/>
</dbReference>
<dbReference type="InterPro" id="IPR011343">
    <property type="entry name" value="DeoC"/>
</dbReference>
<dbReference type="InterPro" id="IPR002915">
    <property type="entry name" value="DeoC/FbaB/LacD_aldolase"/>
</dbReference>
<dbReference type="InterPro" id="IPR028581">
    <property type="entry name" value="DeoC_typeI"/>
</dbReference>
<dbReference type="NCBIfam" id="TIGR00126">
    <property type="entry name" value="deoC"/>
    <property type="match status" value="1"/>
</dbReference>
<dbReference type="PANTHER" id="PTHR10889">
    <property type="entry name" value="DEOXYRIBOSE-PHOSPHATE ALDOLASE"/>
    <property type="match status" value="1"/>
</dbReference>
<dbReference type="PANTHER" id="PTHR10889:SF1">
    <property type="entry name" value="DEOXYRIBOSE-PHOSPHATE ALDOLASE"/>
    <property type="match status" value="1"/>
</dbReference>
<dbReference type="Pfam" id="PF01791">
    <property type="entry name" value="DeoC"/>
    <property type="match status" value="1"/>
</dbReference>
<dbReference type="PIRSF" id="PIRSF001357">
    <property type="entry name" value="DeoC"/>
    <property type="match status" value="1"/>
</dbReference>
<dbReference type="SMART" id="SM01133">
    <property type="entry name" value="DeoC"/>
    <property type="match status" value="1"/>
</dbReference>
<dbReference type="SUPFAM" id="SSF51569">
    <property type="entry name" value="Aldolase"/>
    <property type="match status" value="1"/>
</dbReference>
<accession>Q6G7H3</accession>
<organism>
    <name type="scientific">Staphylococcus aureus (strain MSSA476)</name>
    <dbReference type="NCBI Taxonomy" id="282459"/>
    <lineage>
        <taxon>Bacteria</taxon>
        <taxon>Bacillati</taxon>
        <taxon>Bacillota</taxon>
        <taxon>Bacilli</taxon>
        <taxon>Bacillales</taxon>
        <taxon>Staphylococcaceae</taxon>
        <taxon>Staphylococcus</taxon>
    </lineage>
</organism>
<sequence length="220" mass="23336">MHSAKLIDHTLLKPESTRTQIDQIIDEAKAYHFKSVCVNPTHVKYAAERLADSEVLVCTVIGFPLGASTTATKAFETEDAIQNGADEIDMVINIGALKDGRFDDVQQDIEAVVKAAKGHTVKVIIETVLLDHDEIVKASELTKAAGADFVKTSTGFAGGGATAEDVKLMKDTVGADVEVKASGGVRNLEDFNKMVEAGATRIGASAGVQIMQGLEADSDY</sequence>
<feature type="chain" id="PRO_0000057264" description="Deoxyribose-phosphate aldolase 2">
    <location>
        <begin position="1"/>
        <end position="220"/>
    </location>
</feature>
<feature type="active site" description="Proton donor/acceptor" evidence="1">
    <location>
        <position position="89"/>
    </location>
</feature>
<feature type="active site" description="Schiff-base intermediate with acetaldehyde" evidence="1">
    <location>
        <position position="151"/>
    </location>
</feature>
<feature type="active site" description="Proton donor/acceptor" evidence="1">
    <location>
        <position position="180"/>
    </location>
</feature>
<name>DEOC2_STAAS</name>
<protein>
    <recommendedName>
        <fullName evidence="1">Deoxyribose-phosphate aldolase 2</fullName>
        <shortName evidence="1">DERA 2</shortName>
        <ecNumber evidence="1">4.1.2.4</ecNumber>
    </recommendedName>
    <alternativeName>
        <fullName evidence="1">2-deoxy-D-ribose 5-phosphate aldolase 2</fullName>
    </alternativeName>
    <alternativeName>
        <fullName evidence="1">Phosphodeoxyriboaldolase 2</fullName>
        <shortName evidence="1">Deoxyriboaldolase 2</shortName>
    </alternativeName>
</protein>
<evidence type="ECO:0000255" key="1">
    <source>
        <dbReference type="HAMAP-Rule" id="MF_00114"/>
    </source>
</evidence>
<evidence type="ECO:0000305" key="2"/>
<reference key="1">
    <citation type="journal article" date="2004" name="Proc. Natl. Acad. Sci. U.S.A.">
        <title>Complete genomes of two clinical Staphylococcus aureus strains: evidence for the rapid evolution of virulence and drug resistance.</title>
        <authorList>
            <person name="Holden M.T.G."/>
            <person name="Feil E.J."/>
            <person name="Lindsay J.A."/>
            <person name="Peacock S.J."/>
            <person name="Day N.P.J."/>
            <person name="Enright M.C."/>
            <person name="Foster T.J."/>
            <person name="Moore C.E."/>
            <person name="Hurst L."/>
            <person name="Atkin R."/>
            <person name="Barron A."/>
            <person name="Bason N."/>
            <person name="Bentley S.D."/>
            <person name="Chillingworth C."/>
            <person name="Chillingworth T."/>
            <person name="Churcher C."/>
            <person name="Clark L."/>
            <person name="Corton C."/>
            <person name="Cronin A."/>
            <person name="Doggett J."/>
            <person name="Dowd L."/>
            <person name="Feltwell T."/>
            <person name="Hance Z."/>
            <person name="Harris B."/>
            <person name="Hauser H."/>
            <person name="Holroyd S."/>
            <person name="Jagels K."/>
            <person name="James K.D."/>
            <person name="Lennard N."/>
            <person name="Line A."/>
            <person name="Mayes R."/>
            <person name="Moule S."/>
            <person name="Mungall K."/>
            <person name="Ormond D."/>
            <person name="Quail M.A."/>
            <person name="Rabbinowitsch E."/>
            <person name="Rutherford K.M."/>
            <person name="Sanders M."/>
            <person name="Sharp S."/>
            <person name="Simmonds M."/>
            <person name="Stevens K."/>
            <person name="Whitehead S."/>
            <person name="Barrell B.G."/>
            <person name="Spratt B.G."/>
            <person name="Parkhill J."/>
        </authorList>
    </citation>
    <scope>NUCLEOTIDE SEQUENCE [LARGE SCALE GENOMIC DNA]</scope>
    <source>
        <strain>MSSA476</strain>
    </source>
</reference>
<comment type="function">
    <text evidence="1">Catalyzes a reversible aldol reaction between acetaldehyde and D-glyceraldehyde 3-phosphate to generate 2-deoxy-D-ribose 5-phosphate.</text>
</comment>
<comment type="catalytic activity">
    <reaction evidence="1">
        <text>2-deoxy-D-ribose 5-phosphate = D-glyceraldehyde 3-phosphate + acetaldehyde</text>
        <dbReference type="Rhea" id="RHEA:12821"/>
        <dbReference type="ChEBI" id="CHEBI:15343"/>
        <dbReference type="ChEBI" id="CHEBI:59776"/>
        <dbReference type="ChEBI" id="CHEBI:62877"/>
        <dbReference type="EC" id="4.1.2.4"/>
    </reaction>
</comment>
<comment type="pathway">
    <text evidence="1">Carbohydrate degradation; 2-deoxy-D-ribose 1-phosphate degradation; D-glyceraldehyde 3-phosphate and acetaldehyde from 2-deoxy-alpha-D-ribose 1-phosphate: step 2/2.</text>
</comment>
<comment type="subcellular location">
    <subcellularLocation>
        <location evidence="1">Cytoplasm</location>
    </subcellularLocation>
</comment>
<comment type="similarity">
    <text evidence="1 2">Belongs to the DeoC/FbaB aldolase family. DeoC type 1 subfamily.</text>
</comment>